<protein>
    <recommendedName>
        <fullName>Uncharacterized HIT-like protein Rv0759c</fullName>
    </recommendedName>
</protein>
<accession>P9WML3</accession>
<accession>L0T4T7</accession>
<accession>P0A5B5</accession>
<accession>P71816</accession>
<sequence>MSIFTKIINRELPGRFVYEDDDVVAFLTIEPMTQGHTLVVPRAEIDHWQNVDPALFGRVMSVSQLIGKAVCRAFSTQRAGMIIAGLEVPHLHIHVFPTRSLSDFGFANVDRNPSPGSLDEAQAKIRAALAQLA</sequence>
<reference key="1">
    <citation type="journal article" date="1998" name="Nature">
        <title>Deciphering the biology of Mycobacterium tuberculosis from the complete genome sequence.</title>
        <authorList>
            <person name="Cole S.T."/>
            <person name="Brosch R."/>
            <person name="Parkhill J."/>
            <person name="Garnier T."/>
            <person name="Churcher C.M."/>
            <person name="Harris D.E."/>
            <person name="Gordon S.V."/>
            <person name="Eiglmeier K."/>
            <person name="Gas S."/>
            <person name="Barry C.E. III"/>
            <person name="Tekaia F."/>
            <person name="Badcock K."/>
            <person name="Basham D."/>
            <person name="Brown D."/>
            <person name="Chillingworth T."/>
            <person name="Connor R."/>
            <person name="Davies R.M."/>
            <person name="Devlin K."/>
            <person name="Feltwell T."/>
            <person name="Gentles S."/>
            <person name="Hamlin N."/>
            <person name="Holroyd S."/>
            <person name="Hornsby T."/>
            <person name="Jagels K."/>
            <person name="Krogh A."/>
            <person name="McLean J."/>
            <person name="Moule S."/>
            <person name="Murphy L.D."/>
            <person name="Oliver S."/>
            <person name="Osborne J."/>
            <person name="Quail M.A."/>
            <person name="Rajandream M.A."/>
            <person name="Rogers J."/>
            <person name="Rutter S."/>
            <person name="Seeger K."/>
            <person name="Skelton S."/>
            <person name="Squares S."/>
            <person name="Squares R."/>
            <person name="Sulston J.E."/>
            <person name="Taylor K."/>
            <person name="Whitehead S."/>
            <person name="Barrell B.G."/>
        </authorList>
    </citation>
    <scope>NUCLEOTIDE SEQUENCE [LARGE SCALE GENOMIC DNA]</scope>
    <source>
        <strain>ATCC 25618 / H37Rv</strain>
    </source>
</reference>
<reference key="2">
    <citation type="journal article" date="2022" name="Genomics">
        <title>Deep N-terminomics of Mycobacterium tuberculosis H37Rv extensively correct annotated encoding genes.</title>
        <authorList>
            <person name="Shi J."/>
            <person name="Meng S."/>
            <person name="Wan L."/>
            <person name="Zhang Z."/>
            <person name="Jiang S."/>
            <person name="Zhu H."/>
            <person name="Dai E."/>
            <person name="Chang L."/>
            <person name="Gao H."/>
            <person name="Wan K."/>
            <person name="Zhang L."/>
            <person name="Zhao X."/>
            <person name="Liu H."/>
            <person name="Lyu Z."/>
            <person name="Zhang Y."/>
            <person name="Xu P."/>
        </authorList>
    </citation>
    <scope>PROTEIN SEQUENCE OF 16-42</scope>
    <scope>SEQUENCE REVISION TO N-TERMINUS</scope>
    <source>
        <strain>H37Rv</strain>
    </source>
</reference>
<reference key="3">
    <citation type="journal article" date="2011" name="Mol. Cell. Proteomics">
        <title>Proteogenomic analysis of Mycobacterium tuberculosis by high resolution mass spectrometry.</title>
        <authorList>
            <person name="Kelkar D.S."/>
            <person name="Kumar D."/>
            <person name="Kumar P."/>
            <person name="Balakrishnan L."/>
            <person name="Muthusamy B."/>
            <person name="Yadav A.K."/>
            <person name="Shrivastava P."/>
            <person name="Marimuthu A."/>
            <person name="Anand S."/>
            <person name="Sundaram H."/>
            <person name="Kingsbury R."/>
            <person name="Harsha H.C."/>
            <person name="Nair B."/>
            <person name="Prasad T.S."/>
            <person name="Chauhan D.S."/>
            <person name="Katoch K."/>
            <person name="Katoch V.M."/>
            <person name="Kumar P."/>
            <person name="Chaerkady R."/>
            <person name="Ramachandran S."/>
            <person name="Dash D."/>
            <person name="Pandey A."/>
        </authorList>
    </citation>
    <scope>IDENTIFICATION BY MASS SPECTROMETRY [LARGE SCALE ANALYSIS]</scope>
    <source>
        <strain>ATCC 25618 / H37Rv</strain>
    </source>
</reference>
<gene>
    <name type="ordered locus">Rv0759c</name>
    <name type="ORF">MTCY369.04c</name>
</gene>
<name>YHI1_MYCTU</name>
<feature type="chain" id="PRO_0000109825" description="Uncharacterized HIT-like protein Rv0759c">
    <location>
        <begin position="1"/>
        <end position="133"/>
    </location>
</feature>
<feature type="domain" description="HIT" evidence="1">
    <location>
        <begin position="3"/>
        <end position="106"/>
    </location>
</feature>
<feature type="short sequence motif" description="Histidine triad motif">
    <location>
        <begin position="90"/>
        <end position="94"/>
    </location>
</feature>
<dbReference type="EMBL" id="AL123456">
    <property type="protein sequence ID" value="CCP43506.1"/>
    <property type="status" value="ALT_INIT"/>
    <property type="molecule type" value="Genomic_DNA"/>
</dbReference>
<dbReference type="PIR" id="B70706">
    <property type="entry name" value="B70706"/>
</dbReference>
<dbReference type="RefSeq" id="NP_215273.3">
    <property type="nucleotide sequence ID" value="NC_000962.3"/>
</dbReference>
<dbReference type="RefSeq" id="WP_003403876.1">
    <property type="nucleotide sequence ID" value="NZ_NVQJ01000035.1"/>
</dbReference>
<dbReference type="RefSeq" id="WP_003903165.1">
    <property type="nucleotide sequence ID" value="NC_000962.3"/>
</dbReference>
<dbReference type="SMR" id="P9WML3"/>
<dbReference type="STRING" id="83332.Rv0759c"/>
<dbReference type="PaxDb" id="83332-Rv0759c"/>
<dbReference type="DNASU" id="888776"/>
<dbReference type="GeneID" id="888776"/>
<dbReference type="KEGG" id="mtu:Rv0759c"/>
<dbReference type="PATRIC" id="fig|83332.12.peg.849"/>
<dbReference type="TubercuList" id="Rv0759c"/>
<dbReference type="eggNOG" id="COG0537">
    <property type="taxonomic scope" value="Bacteria"/>
</dbReference>
<dbReference type="InParanoid" id="P9WML3"/>
<dbReference type="OrthoDB" id="9784774at2"/>
<dbReference type="Proteomes" id="UP000001584">
    <property type="component" value="Chromosome"/>
</dbReference>
<dbReference type="GO" id="GO:0005737">
    <property type="term" value="C:cytoplasm"/>
    <property type="evidence" value="ECO:0000318"/>
    <property type="project" value="GO_Central"/>
</dbReference>
<dbReference type="GO" id="GO:0016787">
    <property type="term" value="F:hydrolase activity"/>
    <property type="evidence" value="ECO:0000318"/>
    <property type="project" value="GO_Central"/>
</dbReference>
<dbReference type="Gene3D" id="3.30.428.10">
    <property type="entry name" value="HIT-like"/>
    <property type="match status" value="1"/>
</dbReference>
<dbReference type="InterPro" id="IPR019808">
    <property type="entry name" value="Histidine_triad_CS"/>
</dbReference>
<dbReference type="InterPro" id="IPR001310">
    <property type="entry name" value="Histidine_triad_HIT"/>
</dbReference>
<dbReference type="InterPro" id="IPR011146">
    <property type="entry name" value="HIT-like"/>
</dbReference>
<dbReference type="InterPro" id="IPR036265">
    <property type="entry name" value="HIT-like_sf"/>
</dbReference>
<dbReference type="PANTHER" id="PTHR46648:SF1">
    <property type="entry name" value="ADENOSINE 5'-MONOPHOSPHORAMIDASE HNT1"/>
    <property type="match status" value="1"/>
</dbReference>
<dbReference type="PANTHER" id="PTHR46648">
    <property type="entry name" value="HIT FAMILY PROTEIN 1"/>
    <property type="match status" value="1"/>
</dbReference>
<dbReference type="Pfam" id="PF01230">
    <property type="entry name" value="HIT"/>
    <property type="match status" value="1"/>
</dbReference>
<dbReference type="PRINTS" id="PR00332">
    <property type="entry name" value="HISTRIAD"/>
</dbReference>
<dbReference type="SUPFAM" id="SSF54197">
    <property type="entry name" value="HIT-like"/>
    <property type="match status" value="1"/>
</dbReference>
<dbReference type="PROSITE" id="PS00892">
    <property type="entry name" value="HIT_1"/>
    <property type="match status" value="1"/>
</dbReference>
<dbReference type="PROSITE" id="PS51084">
    <property type="entry name" value="HIT_2"/>
    <property type="match status" value="1"/>
</dbReference>
<comment type="sequence caution" evidence="2">
    <conflict type="erroneous initiation">
        <sequence resource="EMBL-CDS" id="CCP43506"/>
    </conflict>
    <text>Truncated N-terminus.</text>
</comment>
<keyword id="KW-0903">Direct protein sequencing</keyword>
<keyword id="KW-1185">Reference proteome</keyword>
<proteinExistence type="evidence at protein level"/>
<evidence type="ECO:0000255" key="1">
    <source>
        <dbReference type="PROSITE-ProRule" id="PRU00464"/>
    </source>
</evidence>
<evidence type="ECO:0000269" key="2">
    <source>
    </source>
</evidence>
<organism>
    <name type="scientific">Mycobacterium tuberculosis (strain ATCC 25618 / H37Rv)</name>
    <dbReference type="NCBI Taxonomy" id="83332"/>
    <lineage>
        <taxon>Bacteria</taxon>
        <taxon>Bacillati</taxon>
        <taxon>Actinomycetota</taxon>
        <taxon>Actinomycetes</taxon>
        <taxon>Mycobacteriales</taxon>
        <taxon>Mycobacteriaceae</taxon>
        <taxon>Mycobacterium</taxon>
        <taxon>Mycobacterium tuberculosis complex</taxon>
    </lineage>
</organism>